<name>CINAL_ACAM1</name>
<comment type="similarity">
    <text evidence="1">Belongs to the CinA family.</text>
</comment>
<gene>
    <name type="ordered locus">AM1_1941</name>
</gene>
<proteinExistence type="inferred from homology"/>
<organism>
    <name type="scientific">Acaryochloris marina (strain MBIC 11017)</name>
    <dbReference type="NCBI Taxonomy" id="329726"/>
    <lineage>
        <taxon>Bacteria</taxon>
        <taxon>Bacillati</taxon>
        <taxon>Cyanobacteriota</taxon>
        <taxon>Cyanophyceae</taxon>
        <taxon>Acaryochloridales</taxon>
        <taxon>Acaryochloridaceae</taxon>
        <taxon>Acaryochloris</taxon>
    </lineage>
</organism>
<keyword id="KW-1185">Reference proteome</keyword>
<dbReference type="EMBL" id="CP000828">
    <property type="protein sequence ID" value="ABW26958.1"/>
    <property type="molecule type" value="Genomic_DNA"/>
</dbReference>
<dbReference type="RefSeq" id="WP_012162457.1">
    <property type="nucleotide sequence ID" value="NC_009925.1"/>
</dbReference>
<dbReference type="SMR" id="B0CEJ2"/>
<dbReference type="STRING" id="329726.AM1_1941"/>
<dbReference type="KEGG" id="amr:AM1_1941"/>
<dbReference type="eggNOG" id="COG1058">
    <property type="taxonomic scope" value="Bacteria"/>
</dbReference>
<dbReference type="eggNOG" id="COG1546">
    <property type="taxonomic scope" value="Bacteria"/>
</dbReference>
<dbReference type="HOGENOM" id="CLU_030805_9_3_3"/>
<dbReference type="OrthoDB" id="9801454at2"/>
<dbReference type="Proteomes" id="UP000000268">
    <property type="component" value="Chromosome"/>
</dbReference>
<dbReference type="CDD" id="cd00885">
    <property type="entry name" value="cinA"/>
    <property type="match status" value="1"/>
</dbReference>
<dbReference type="Gene3D" id="3.30.70.2860">
    <property type="match status" value="1"/>
</dbReference>
<dbReference type="Gene3D" id="3.90.950.20">
    <property type="entry name" value="CinA-like"/>
    <property type="match status" value="1"/>
</dbReference>
<dbReference type="Gene3D" id="3.40.980.10">
    <property type="entry name" value="MoaB/Mog-like domain"/>
    <property type="match status" value="1"/>
</dbReference>
<dbReference type="HAMAP" id="MF_00226_B">
    <property type="entry name" value="CinA_B"/>
    <property type="match status" value="1"/>
</dbReference>
<dbReference type="InterPro" id="IPR050101">
    <property type="entry name" value="CinA"/>
</dbReference>
<dbReference type="InterPro" id="IPR036653">
    <property type="entry name" value="CinA-like_C"/>
</dbReference>
<dbReference type="InterPro" id="IPR008136">
    <property type="entry name" value="CinA_C"/>
</dbReference>
<dbReference type="InterPro" id="IPR041424">
    <property type="entry name" value="CinA_KH"/>
</dbReference>
<dbReference type="InterPro" id="IPR008135">
    <property type="entry name" value="Competence-induced_CinA"/>
</dbReference>
<dbReference type="InterPro" id="IPR036425">
    <property type="entry name" value="MoaB/Mog-like_dom_sf"/>
</dbReference>
<dbReference type="InterPro" id="IPR001453">
    <property type="entry name" value="MoaB/Mog_dom"/>
</dbReference>
<dbReference type="NCBIfam" id="TIGR00200">
    <property type="entry name" value="cinA_nterm"/>
    <property type="match status" value="1"/>
</dbReference>
<dbReference type="NCBIfam" id="TIGR00199">
    <property type="entry name" value="PncC_domain"/>
    <property type="match status" value="1"/>
</dbReference>
<dbReference type="NCBIfam" id="NF001813">
    <property type="entry name" value="PRK00549.1"/>
    <property type="match status" value="1"/>
</dbReference>
<dbReference type="PANTHER" id="PTHR13939">
    <property type="entry name" value="NICOTINAMIDE-NUCLEOTIDE AMIDOHYDROLASE PNCC"/>
    <property type="match status" value="1"/>
</dbReference>
<dbReference type="PANTHER" id="PTHR13939:SF0">
    <property type="entry name" value="NMN AMIDOHYDROLASE-LIKE PROTEIN YFAY"/>
    <property type="match status" value="1"/>
</dbReference>
<dbReference type="Pfam" id="PF02464">
    <property type="entry name" value="CinA"/>
    <property type="match status" value="1"/>
</dbReference>
<dbReference type="Pfam" id="PF18146">
    <property type="entry name" value="CinA_KH"/>
    <property type="match status" value="1"/>
</dbReference>
<dbReference type="Pfam" id="PF00994">
    <property type="entry name" value="MoCF_biosynth"/>
    <property type="match status" value="1"/>
</dbReference>
<dbReference type="PIRSF" id="PIRSF006728">
    <property type="entry name" value="CinA"/>
    <property type="match status" value="1"/>
</dbReference>
<dbReference type="SMART" id="SM00852">
    <property type="entry name" value="MoCF_biosynth"/>
    <property type="match status" value="1"/>
</dbReference>
<dbReference type="SUPFAM" id="SSF142433">
    <property type="entry name" value="CinA-like"/>
    <property type="match status" value="1"/>
</dbReference>
<dbReference type="SUPFAM" id="SSF53218">
    <property type="entry name" value="Molybdenum cofactor biosynthesis proteins"/>
    <property type="match status" value="1"/>
</dbReference>
<feature type="chain" id="PRO_0000336497" description="CinA-like protein">
    <location>
        <begin position="1"/>
        <end position="419"/>
    </location>
</feature>
<sequence>MSRSAEVICVGTELLLGEVLNSNAQFLGQELARLGIAHFHQTVVGDNPTRIKRAIALACQRSQLLIFTGGLGPTPDDLTTETLADFFQAPLVNHPEILEDIARKFAQRNRVPSPSNDKQALLPDGAQILPNPIGSAPGIIWHPRPELTIFTFPGVPKEFHRMWQETAVPYLQSTGWVTAQIYSRVLRFWGIPESTLADQVAPLLALTNPTVAPYASKGQARLRISTRATSQETAHQVIAPIEQQIRQICGLHCFGGDDETLESVVGKLLQQRGETLAVAESCTGGGLGQRITGVSGSSTYFLGGVISYTNAAKRDLLKVNAADLEQYGAVSAIVAEQMAAGVRSQLHSTWGISITGIAGPDGGSETKPVGLVYIGLSGPQGTQSFEYQISPLRGRDWIRQMSTSHALDRLRRQLLADES</sequence>
<evidence type="ECO:0000255" key="1">
    <source>
        <dbReference type="HAMAP-Rule" id="MF_00226"/>
    </source>
</evidence>
<protein>
    <recommendedName>
        <fullName evidence="1">CinA-like protein</fullName>
    </recommendedName>
</protein>
<accession>B0CEJ2</accession>
<reference key="1">
    <citation type="journal article" date="2008" name="Proc. Natl. Acad. Sci. U.S.A.">
        <title>Niche adaptation and genome expansion in the chlorophyll d-producing cyanobacterium Acaryochloris marina.</title>
        <authorList>
            <person name="Swingley W.D."/>
            <person name="Chen M."/>
            <person name="Cheung P.C."/>
            <person name="Conrad A.L."/>
            <person name="Dejesa L.C."/>
            <person name="Hao J."/>
            <person name="Honchak B.M."/>
            <person name="Karbach L.E."/>
            <person name="Kurdoglu A."/>
            <person name="Lahiri S."/>
            <person name="Mastrian S.D."/>
            <person name="Miyashita H."/>
            <person name="Page L."/>
            <person name="Ramakrishna P."/>
            <person name="Satoh S."/>
            <person name="Sattley W.M."/>
            <person name="Shimada Y."/>
            <person name="Taylor H.L."/>
            <person name="Tomo T."/>
            <person name="Tsuchiya T."/>
            <person name="Wang Z.T."/>
            <person name="Raymond J."/>
            <person name="Mimuro M."/>
            <person name="Blankenship R.E."/>
            <person name="Touchman J.W."/>
        </authorList>
    </citation>
    <scope>NUCLEOTIDE SEQUENCE [LARGE SCALE GENOMIC DNA]</scope>
    <source>
        <strain>MBIC 11017</strain>
    </source>
</reference>